<sequence length="436" mass="48236">MEMLRRNFFRLLMVLVAGCGLIASPAKALVEIDINKGNVEPLPIAITDFVQGELAQKISDVIAADLKRSGLFAPINKGAFIEKVSNPDATPRFEDWKVINAQALVIGRVTKEGDGRLKAEFRLWDTFAGTQMLGQQFYTQPENWRRVAHIIADAIYERITGEKGYFDTRIVYVAESGPKNARQRQLAIMDQDGANSRALTNSNDIVLTPRFSPNRQEITYMSFENQQPRVYLLQLETGQREVVGNFPGMTFAPRFSPDGQRVIMSLQQEGNANIYTMDLRSRTTTRLTNTAAIDTSPSYSPDGSRVVFESDRGGRQQLYVMGADGSGQTRISFGDGSYSTPVWSPRGDLIAFTKQSGGKFSIGVMKPDGSGERILTTGFHNEGPTWAPNGRVLMFFRQNAGAGGPQLYSIDLTGYNEQLVPTQGFASDPAWSPLME</sequence>
<dbReference type="EMBL" id="CP000738">
    <property type="protein sequence ID" value="ABR61457.1"/>
    <property type="molecule type" value="Genomic_DNA"/>
</dbReference>
<dbReference type="RefSeq" id="WP_012066846.1">
    <property type="nucleotide sequence ID" value="NC_009636.1"/>
</dbReference>
<dbReference type="RefSeq" id="YP_001328292.1">
    <property type="nucleotide sequence ID" value="NC_009636.1"/>
</dbReference>
<dbReference type="SMR" id="A6UCS7"/>
<dbReference type="STRING" id="366394.Smed_2627"/>
<dbReference type="GeneID" id="61611843"/>
<dbReference type="KEGG" id="smd:Smed_2627"/>
<dbReference type="PATRIC" id="fig|366394.8.peg.5824"/>
<dbReference type="eggNOG" id="COG0823">
    <property type="taxonomic scope" value="Bacteria"/>
</dbReference>
<dbReference type="HOGENOM" id="CLU_047123_0_0_5"/>
<dbReference type="OrthoDB" id="9802240at2"/>
<dbReference type="Proteomes" id="UP000001108">
    <property type="component" value="Chromosome"/>
</dbReference>
<dbReference type="GO" id="GO:0042597">
    <property type="term" value="C:periplasmic space"/>
    <property type="evidence" value="ECO:0007669"/>
    <property type="project" value="UniProtKB-SubCell"/>
</dbReference>
<dbReference type="GO" id="GO:0051301">
    <property type="term" value="P:cell division"/>
    <property type="evidence" value="ECO:0007669"/>
    <property type="project" value="UniProtKB-UniRule"/>
</dbReference>
<dbReference type="GO" id="GO:0017038">
    <property type="term" value="P:protein import"/>
    <property type="evidence" value="ECO:0007669"/>
    <property type="project" value="InterPro"/>
</dbReference>
<dbReference type="Gene3D" id="2.120.10.30">
    <property type="entry name" value="TolB, C-terminal domain"/>
    <property type="match status" value="1"/>
</dbReference>
<dbReference type="Gene3D" id="3.40.50.10070">
    <property type="entry name" value="TolB, N-terminal domain"/>
    <property type="match status" value="1"/>
</dbReference>
<dbReference type="HAMAP" id="MF_00671">
    <property type="entry name" value="TolB"/>
    <property type="match status" value="1"/>
</dbReference>
<dbReference type="InterPro" id="IPR011042">
    <property type="entry name" value="6-blade_b-propeller_TolB-like"/>
</dbReference>
<dbReference type="InterPro" id="IPR011659">
    <property type="entry name" value="PD40"/>
</dbReference>
<dbReference type="InterPro" id="IPR014167">
    <property type="entry name" value="Tol-Pal_TolB"/>
</dbReference>
<dbReference type="InterPro" id="IPR007195">
    <property type="entry name" value="TolB_N"/>
</dbReference>
<dbReference type="NCBIfam" id="TIGR02800">
    <property type="entry name" value="propeller_TolB"/>
    <property type="match status" value="1"/>
</dbReference>
<dbReference type="PANTHER" id="PTHR36842:SF1">
    <property type="entry name" value="PROTEIN TOLB"/>
    <property type="match status" value="1"/>
</dbReference>
<dbReference type="PANTHER" id="PTHR36842">
    <property type="entry name" value="PROTEIN TOLB HOMOLOG"/>
    <property type="match status" value="1"/>
</dbReference>
<dbReference type="Pfam" id="PF07676">
    <property type="entry name" value="PD40"/>
    <property type="match status" value="4"/>
</dbReference>
<dbReference type="Pfam" id="PF04052">
    <property type="entry name" value="TolB_N"/>
    <property type="match status" value="1"/>
</dbReference>
<dbReference type="SUPFAM" id="SSF52964">
    <property type="entry name" value="TolB, N-terminal domain"/>
    <property type="match status" value="1"/>
</dbReference>
<dbReference type="SUPFAM" id="SSF69304">
    <property type="entry name" value="Tricorn protease N-terminal domain"/>
    <property type="match status" value="1"/>
</dbReference>
<feature type="signal peptide" evidence="1">
    <location>
        <begin position="1"/>
        <end position="28"/>
    </location>
</feature>
<feature type="chain" id="PRO_5000257644" description="Tol-Pal system protein TolB" evidence="1">
    <location>
        <begin position="29"/>
        <end position="436"/>
    </location>
</feature>
<gene>
    <name evidence="1" type="primary">tolB</name>
    <name type="ordered locus">Smed_2627</name>
</gene>
<protein>
    <recommendedName>
        <fullName evidence="1">Tol-Pal system protein TolB</fullName>
    </recommendedName>
</protein>
<reference key="1">
    <citation type="submission" date="2007-06" db="EMBL/GenBank/DDBJ databases">
        <title>Complete sequence of Sinorhizobium medicae WSM419 chromosome.</title>
        <authorList>
            <consortium name="US DOE Joint Genome Institute"/>
            <person name="Copeland A."/>
            <person name="Lucas S."/>
            <person name="Lapidus A."/>
            <person name="Barry K."/>
            <person name="Glavina del Rio T."/>
            <person name="Dalin E."/>
            <person name="Tice H."/>
            <person name="Pitluck S."/>
            <person name="Chain P."/>
            <person name="Malfatti S."/>
            <person name="Shin M."/>
            <person name="Vergez L."/>
            <person name="Schmutz J."/>
            <person name="Larimer F."/>
            <person name="Land M."/>
            <person name="Hauser L."/>
            <person name="Kyrpides N."/>
            <person name="Mikhailova N."/>
            <person name="Reeve W.G."/>
            <person name="Richardson P."/>
        </authorList>
    </citation>
    <scope>NUCLEOTIDE SEQUENCE [LARGE SCALE GENOMIC DNA]</scope>
    <source>
        <strain>WSM419</strain>
    </source>
</reference>
<keyword id="KW-0131">Cell cycle</keyword>
<keyword id="KW-0132">Cell division</keyword>
<keyword id="KW-0574">Periplasm</keyword>
<keyword id="KW-0732">Signal</keyword>
<proteinExistence type="inferred from homology"/>
<name>TOLB_SINMW</name>
<accession>A6UCS7</accession>
<evidence type="ECO:0000255" key="1">
    <source>
        <dbReference type="HAMAP-Rule" id="MF_00671"/>
    </source>
</evidence>
<organism>
    <name type="scientific">Sinorhizobium medicae (strain WSM419)</name>
    <name type="common">Ensifer medicae</name>
    <dbReference type="NCBI Taxonomy" id="366394"/>
    <lineage>
        <taxon>Bacteria</taxon>
        <taxon>Pseudomonadati</taxon>
        <taxon>Pseudomonadota</taxon>
        <taxon>Alphaproteobacteria</taxon>
        <taxon>Hyphomicrobiales</taxon>
        <taxon>Rhizobiaceae</taxon>
        <taxon>Sinorhizobium/Ensifer group</taxon>
        <taxon>Sinorhizobium</taxon>
    </lineage>
</organism>
<comment type="function">
    <text evidence="1">Part of the Tol-Pal system, which plays a role in outer membrane invagination during cell division and is important for maintaining outer membrane integrity.</text>
</comment>
<comment type="subunit">
    <text evidence="1">The Tol-Pal system is composed of five core proteins: the inner membrane proteins TolA, TolQ and TolR, the periplasmic protein TolB and the outer membrane protein Pal. They form a network linking the inner and outer membranes and the peptidoglycan layer.</text>
</comment>
<comment type="subcellular location">
    <subcellularLocation>
        <location evidence="1">Periplasm</location>
    </subcellularLocation>
</comment>
<comment type="similarity">
    <text evidence="1">Belongs to the TolB family.</text>
</comment>